<protein>
    <recommendedName>
        <fullName>DEAD-box ATP-dependent RNA helicase 8</fullName>
        <ecNumber>3.6.4.13</ecNumber>
    </recommendedName>
</protein>
<sequence>MDPRARYPPGIGNGRGGNPNYYNRGPPLQQQHNHHQQQQTSAPHHQQYVQRQPQQHHHHNHHQQHQQQQQQWLRRNQIAREAAGTDRNSEPKAVAQSPAVDGIDSSSQDWKAQLKLPPQDTRYRTEDVTATKGNEFEDYFLKRELLMGIYEKGFERPSPIQEESIPIALTGSDILARAKNGTGKTAAFCIPALEKIDQEKNAIQVVILVPTRELALQTSQVCKELGKHLKIQVMVTTGGTSLKDDIIRLYQPVHLLVGTPGRILDLTKKGICILKDCSMLIMDEADKLLSPEFQPSVEQLIRYLPASRQILMFSATFPVTVKEFKDKYLPKPYVINLMDELTLKGITQFYAFVEERQKVHCLNTLFSKLQINQSIIFCNSVNRVELLAKKITELGYSCFYIHAKMLQDHRNRVFHDFRNGACRNLVCTDLFTRGIDIQAVNVVINFDFPKTAETYLHRVGRSGRFGHLGLAVNLITYEDRFNLYRIEQELGTEIKPIPPQIDQAIYCQ</sequence>
<evidence type="ECO:0000250" key="1"/>
<evidence type="ECO:0000255" key="2">
    <source>
        <dbReference type="PROSITE-ProRule" id="PRU00541"/>
    </source>
</evidence>
<evidence type="ECO:0000255" key="3">
    <source>
        <dbReference type="PROSITE-ProRule" id="PRU00542"/>
    </source>
</evidence>
<evidence type="ECO:0000256" key="4">
    <source>
        <dbReference type="SAM" id="MobiDB-lite"/>
    </source>
</evidence>
<evidence type="ECO:0000303" key="5">
    <source>
    </source>
</evidence>
<evidence type="ECO:0000305" key="6"/>
<evidence type="ECO:0000312" key="7">
    <source>
        <dbReference type="EMBL" id="EEE57460.1"/>
    </source>
</evidence>
<gene>
    <name type="ordered locus">Os02g0641800</name>
    <name type="ordered locus">LOC_Os02g42860</name>
    <name type="ORF">OJ1112_G03.6-1</name>
    <name type="ORF">OJ1112_G03.6-2</name>
    <name evidence="7" type="ORF">OsJ_07688</name>
</gene>
<reference key="1">
    <citation type="journal article" date="2005" name="Nature">
        <title>The map-based sequence of the rice genome.</title>
        <authorList>
            <consortium name="International rice genome sequencing project (IRGSP)"/>
        </authorList>
    </citation>
    <scope>NUCLEOTIDE SEQUENCE [LARGE SCALE GENOMIC DNA]</scope>
    <source>
        <strain>cv. Nipponbare</strain>
    </source>
</reference>
<reference key="2">
    <citation type="journal article" date="2008" name="Nucleic Acids Res.">
        <title>The rice annotation project database (RAP-DB): 2008 update.</title>
        <authorList>
            <consortium name="The rice annotation project (RAP)"/>
        </authorList>
    </citation>
    <scope>GENOME REANNOTATION</scope>
    <source>
        <strain>cv. Nipponbare</strain>
    </source>
</reference>
<reference key="3">
    <citation type="journal article" date="2013" name="Rice">
        <title>Improvement of the Oryza sativa Nipponbare reference genome using next generation sequence and optical map data.</title>
        <authorList>
            <person name="Kawahara Y."/>
            <person name="de la Bastide M."/>
            <person name="Hamilton J.P."/>
            <person name="Kanamori H."/>
            <person name="McCombie W.R."/>
            <person name="Ouyang S."/>
            <person name="Schwartz D.C."/>
            <person name="Tanaka T."/>
            <person name="Wu J."/>
            <person name="Zhou S."/>
            <person name="Childs K.L."/>
            <person name="Davidson R.M."/>
            <person name="Lin H."/>
            <person name="Quesada-Ocampo L."/>
            <person name="Vaillancourt B."/>
            <person name="Sakai H."/>
            <person name="Lee S.S."/>
            <person name="Kim J."/>
            <person name="Numa H."/>
            <person name="Itoh T."/>
            <person name="Buell C.R."/>
            <person name="Matsumoto T."/>
        </authorList>
    </citation>
    <scope>GENOME REANNOTATION</scope>
    <source>
        <strain>cv. Nipponbare</strain>
    </source>
</reference>
<reference key="4">
    <citation type="journal article" date="2005" name="PLoS Biol.">
        <title>The genomes of Oryza sativa: a history of duplications.</title>
        <authorList>
            <person name="Yu J."/>
            <person name="Wang J."/>
            <person name="Lin W."/>
            <person name="Li S."/>
            <person name="Li H."/>
            <person name="Zhou J."/>
            <person name="Ni P."/>
            <person name="Dong W."/>
            <person name="Hu S."/>
            <person name="Zeng C."/>
            <person name="Zhang J."/>
            <person name="Zhang Y."/>
            <person name="Li R."/>
            <person name="Xu Z."/>
            <person name="Li S."/>
            <person name="Li X."/>
            <person name="Zheng H."/>
            <person name="Cong L."/>
            <person name="Lin L."/>
            <person name="Yin J."/>
            <person name="Geng J."/>
            <person name="Li G."/>
            <person name="Shi J."/>
            <person name="Liu J."/>
            <person name="Lv H."/>
            <person name="Li J."/>
            <person name="Wang J."/>
            <person name="Deng Y."/>
            <person name="Ran L."/>
            <person name="Shi X."/>
            <person name="Wang X."/>
            <person name="Wu Q."/>
            <person name="Li C."/>
            <person name="Ren X."/>
            <person name="Wang J."/>
            <person name="Wang X."/>
            <person name="Li D."/>
            <person name="Liu D."/>
            <person name="Zhang X."/>
            <person name="Ji Z."/>
            <person name="Zhao W."/>
            <person name="Sun Y."/>
            <person name="Zhang Z."/>
            <person name="Bao J."/>
            <person name="Han Y."/>
            <person name="Dong L."/>
            <person name="Ji J."/>
            <person name="Chen P."/>
            <person name="Wu S."/>
            <person name="Liu J."/>
            <person name="Xiao Y."/>
            <person name="Bu D."/>
            <person name="Tan J."/>
            <person name="Yang L."/>
            <person name="Ye C."/>
            <person name="Zhang J."/>
            <person name="Xu J."/>
            <person name="Zhou Y."/>
            <person name="Yu Y."/>
            <person name="Zhang B."/>
            <person name="Zhuang S."/>
            <person name="Wei H."/>
            <person name="Liu B."/>
            <person name="Lei M."/>
            <person name="Yu H."/>
            <person name="Li Y."/>
            <person name="Xu H."/>
            <person name="Wei S."/>
            <person name="He X."/>
            <person name="Fang L."/>
            <person name="Zhang Z."/>
            <person name="Zhang Y."/>
            <person name="Huang X."/>
            <person name="Su Z."/>
            <person name="Tong W."/>
            <person name="Li J."/>
            <person name="Tong Z."/>
            <person name="Li S."/>
            <person name="Ye J."/>
            <person name="Wang L."/>
            <person name="Fang L."/>
            <person name="Lei T."/>
            <person name="Chen C.-S."/>
            <person name="Chen H.-C."/>
            <person name="Xu Z."/>
            <person name="Li H."/>
            <person name="Huang H."/>
            <person name="Zhang F."/>
            <person name="Xu H."/>
            <person name="Li N."/>
            <person name="Zhao C."/>
            <person name="Li S."/>
            <person name="Dong L."/>
            <person name="Huang Y."/>
            <person name="Li L."/>
            <person name="Xi Y."/>
            <person name="Qi Q."/>
            <person name="Li W."/>
            <person name="Zhang B."/>
            <person name="Hu W."/>
            <person name="Zhang Y."/>
            <person name="Tian X."/>
            <person name="Jiao Y."/>
            <person name="Liang X."/>
            <person name="Jin J."/>
            <person name="Gao L."/>
            <person name="Zheng W."/>
            <person name="Hao B."/>
            <person name="Liu S.-M."/>
            <person name="Wang W."/>
            <person name="Yuan L."/>
            <person name="Cao M."/>
            <person name="McDermott J."/>
            <person name="Samudrala R."/>
            <person name="Wang J."/>
            <person name="Wong G.K.-S."/>
            <person name="Yang H."/>
        </authorList>
    </citation>
    <scope>NUCLEOTIDE SEQUENCE [LARGE SCALE GENOMIC DNA]</scope>
    <source>
        <strain>cv. Nipponbare</strain>
    </source>
</reference>
<reference key="5">
    <citation type="journal article" date="2003" name="Science">
        <title>Collection, mapping, and annotation of over 28,000 cDNA clones from japonica rice.</title>
        <authorList>
            <consortium name="The rice full-length cDNA consortium"/>
        </authorList>
    </citation>
    <scope>NUCLEOTIDE SEQUENCE [LARGE SCALE MRNA] (ISOFORMS 1 AND 2)</scope>
    <source>
        <strain>cv. Nipponbare</strain>
    </source>
</reference>
<keyword id="KW-0025">Alternative splicing</keyword>
<keyword id="KW-0067">ATP-binding</keyword>
<keyword id="KW-0963">Cytoplasm</keyword>
<keyword id="KW-0347">Helicase</keyword>
<keyword id="KW-0378">Hydrolase</keyword>
<keyword id="KW-0507">mRNA processing</keyword>
<keyword id="KW-0509">mRNA transport</keyword>
<keyword id="KW-0547">Nucleotide-binding</keyword>
<keyword id="KW-1185">Reference proteome</keyword>
<keyword id="KW-0694">RNA-binding</keyword>
<keyword id="KW-0810">Translation regulation</keyword>
<keyword id="KW-0813">Transport</keyword>
<dbReference type="EC" id="3.6.4.13"/>
<dbReference type="EMBL" id="AP004133">
    <property type="protein sequence ID" value="BAD25226.1"/>
    <property type="molecule type" value="Genomic_DNA"/>
</dbReference>
<dbReference type="EMBL" id="AP004133">
    <property type="protein sequence ID" value="BAD25227.1"/>
    <property type="molecule type" value="Genomic_DNA"/>
</dbReference>
<dbReference type="EMBL" id="AP008208">
    <property type="protein sequence ID" value="BAF09466.1"/>
    <property type="molecule type" value="Genomic_DNA"/>
</dbReference>
<dbReference type="EMBL" id="AP014958">
    <property type="protein sequence ID" value="BAS79992.1"/>
    <property type="molecule type" value="Genomic_DNA"/>
</dbReference>
<dbReference type="EMBL" id="AP014958">
    <property type="protein sequence ID" value="BAS79993.1"/>
    <property type="molecule type" value="Genomic_DNA"/>
</dbReference>
<dbReference type="EMBL" id="CM000139">
    <property type="protein sequence ID" value="EEE57460.1"/>
    <property type="molecule type" value="Genomic_DNA"/>
</dbReference>
<dbReference type="EMBL" id="AK066504">
    <property type="status" value="NOT_ANNOTATED_CDS"/>
    <property type="molecule type" value="mRNA"/>
</dbReference>
<dbReference type="EMBL" id="AK072124">
    <property type="protein sequence ID" value="BAG92832.1"/>
    <property type="molecule type" value="mRNA"/>
</dbReference>
<dbReference type="RefSeq" id="XP_015627069.1">
    <property type="nucleotide sequence ID" value="XM_015771583.1"/>
</dbReference>
<dbReference type="SMR" id="Q6H7S2"/>
<dbReference type="FunCoup" id="Q6H7S2">
    <property type="interactions" value="3482"/>
</dbReference>
<dbReference type="STRING" id="39947.Q6H7S2"/>
<dbReference type="PaxDb" id="39947-Q6H7S2"/>
<dbReference type="EnsemblPlants" id="Os02t0641800-02">
    <molecule id="Q6H7S2-1"/>
    <property type="protein sequence ID" value="Os02t0641800-02"/>
    <property type="gene ID" value="Os02g0641800"/>
</dbReference>
<dbReference type="Gramene" id="Os02t0641800-02">
    <molecule id="Q6H7S2-1"/>
    <property type="protein sequence ID" value="Os02t0641800-02"/>
    <property type="gene ID" value="Os02g0641800"/>
</dbReference>
<dbReference type="KEGG" id="dosa:Os02g0641800"/>
<dbReference type="eggNOG" id="KOG0326">
    <property type="taxonomic scope" value="Eukaryota"/>
</dbReference>
<dbReference type="InParanoid" id="Q6H7S2"/>
<dbReference type="OMA" id="TYEDRHT"/>
<dbReference type="OrthoDB" id="10265785at2759"/>
<dbReference type="Proteomes" id="UP000000763">
    <property type="component" value="Chromosome 2"/>
</dbReference>
<dbReference type="Proteomes" id="UP000007752">
    <property type="component" value="Chromosome 2"/>
</dbReference>
<dbReference type="Proteomes" id="UP000059680">
    <property type="component" value="Chromosome 2"/>
</dbReference>
<dbReference type="GO" id="GO:0010494">
    <property type="term" value="C:cytoplasmic stress granule"/>
    <property type="evidence" value="ECO:0000318"/>
    <property type="project" value="GO_Central"/>
</dbReference>
<dbReference type="GO" id="GO:0000932">
    <property type="term" value="C:P-body"/>
    <property type="evidence" value="ECO:0000318"/>
    <property type="project" value="GO_Central"/>
</dbReference>
<dbReference type="GO" id="GO:0005524">
    <property type="term" value="F:ATP binding"/>
    <property type="evidence" value="ECO:0007669"/>
    <property type="project" value="UniProtKB-KW"/>
</dbReference>
<dbReference type="GO" id="GO:0016887">
    <property type="term" value="F:ATP hydrolysis activity"/>
    <property type="evidence" value="ECO:0007669"/>
    <property type="project" value="RHEA"/>
</dbReference>
<dbReference type="GO" id="GO:0003729">
    <property type="term" value="F:mRNA binding"/>
    <property type="evidence" value="ECO:0000318"/>
    <property type="project" value="GO_Central"/>
</dbReference>
<dbReference type="GO" id="GO:0003724">
    <property type="term" value="F:RNA helicase activity"/>
    <property type="evidence" value="ECO:0007669"/>
    <property type="project" value="UniProtKB-EC"/>
</dbReference>
<dbReference type="GO" id="GO:0006397">
    <property type="term" value="P:mRNA processing"/>
    <property type="evidence" value="ECO:0007669"/>
    <property type="project" value="UniProtKB-KW"/>
</dbReference>
<dbReference type="GO" id="GO:0051028">
    <property type="term" value="P:mRNA transport"/>
    <property type="evidence" value="ECO:0007669"/>
    <property type="project" value="UniProtKB-KW"/>
</dbReference>
<dbReference type="GO" id="GO:0017148">
    <property type="term" value="P:negative regulation of translation"/>
    <property type="evidence" value="ECO:0000318"/>
    <property type="project" value="GO_Central"/>
</dbReference>
<dbReference type="GO" id="GO:0033962">
    <property type="term" value="P:P-body assembly"/>
    <property type="evidence" value="ECO:0000318"/>
    <property type="project" value="GO_Central"/>
</dbReference>
<dbReference type="GO" id="GO:0034063">
    <property type="term" value="P:stress granule assembly"/>
    <property type="evidence" value="ECO:0000318"/>
    <property type="project" value="GO_Central"/>
</dbReference>
<dbReference type="CDD" id="cd17940">
    <property type="entry name" value="DEADc_DDX6"/>
    <property type="match status" value="1"/>
</dbReference>
<dbReference type="CDD" id="cd18787">
    <property type="entry name" value="SF2_C_DEAD"/>
    <property type="match status" value="1"/>
</dbReference>
<dbReference type="FunFam" id="3.40.50.300:FF:000114">
    <property type="entry name" value="ATP-dependent RNA helicase DDX6"/>
    <property type="match status" value="1"/>
</dbReference>
<dbReference type="FunFam" id="3.40.50.300:FF:000364">
    <property type="entry name" value="ATP-dependent RNA helicase DDX6"/>
    <property type="match status" value="1"/>
</dbReference>
<dbReference type="Gene3D" id="3.40.50.300">
    <property type="entry name" value="P-loop containing nucleotide triphosphate hydrolases"/>
    <property type="match status" value="2"/>
</dbReference>
<dbReference type="InterPro" id="IPR011545">
    <property type="entry name" value="DEAD/DEAH_box_helicase_dom"/>
</dbReference>
<dbReference type="InterPro" id="IPR014001">
    <property type="entry name" value="Helicase_ATP-bd"/>
</dbReference>
<dbReference type="InterPro" id="IPR001650">
    <property type="entry name" value="Helicase_C-like"/>
</dbReference>
<dbReference type="InterPro" id="IPR027417">
    <property type="entry name" value="P-loop_NTPase"/>
</dbReference>
<dbReference type="InterPro" id="IPR000629">
    <property type="entry name" value="RNA-helicase_DEAD-box_CS"/>
</dbReference>
<dbReference type="InterPro" id="IPR014014">
    <property type="entry name" value="RNA_helicase_DEAD_Q_motif"/>
</dbReference>
<dbReference type="PANTHER" id="PTHR47960">
    <property type="entry name" value="DEAD-BOX ATP-DEPENDENT RNA HELICASE 50"/>
    <property type="match status" value="1"/>
</dbReference>
<dbReference type="Pfam" id="PF00270">
    <property type="entry name" value="DEAD"/>
    <property type="match status" value="1"/>
</dbReference>
<dbReference type="Pfam" id="PF00271">
    <property type="entry name" value="Helicase_C"/>
    <property type="match status" value="1"/>
</dbReference>
<dbReference type="SMART" id="SM00487">
    <property type="entry name" value="DEXDc"/>
    <property type="match status" value="1"/>
</dbReference>
<dbReference type="SMART" id="SM00490">
    <property type="entry name" value="HELICc"/>
    <property type="match status" value="1"/>
</dbReference>
<dbReference type="SUPFAM" id="SSF52540">
    <property type="entry name" value="P-loop containing nucleoside triphosphate hydrolases"/>
    <property type="match status" value="1"/>
</dbReference>
<dbReference type="PROSITE" id="PS00039">
    <property type="entry name" value="DEAD_ATP_HELICASE"/>
    <property type="match status" value="1"/>
</dbReference>
<dbReference type="PROSITE" id="PS51192">
    <property type="entry name" value="HELICASE_ATP_BIND_1"/>
    <property type="match status" value="1"/>
</dbReference>
<dbReference type="PROSITE" id="PS51194">
    <property type="entry name" value="HELICASE_CTER"/>
    <property type="match status" value="1"/>
</dbReference>
<dbReference type="PROSITE" id="PS51195">
    <property type="entry name" value="Q_MOTIF"/>
    <property type="match status" value="1"/>
</dbReference>
<proteinExistence type="evidence at transcript level"/>
<accession>Q6H7S2</accession>
<accession>B7EKD5</accession>
<accession>Q6H7S3</accession>
<name>RH8_ORYSJ</name>
<feature type="chain" id="PRO_0000282459" description="DEAD-box ATP-dependent RNA helicase 8">
    <location>
        <begin position="1"/>
        <end position="508"/>
    </location>
</feature>
<feature type="domain" description="Helicase ATP-binding" evidence="2">
    <location>
        <begin position="165"/>
        <end position="335"/>
    </location>
</feature>
<feature type="domain" description="Helicase C-terminal" evidence="3">
    <location>
        <begin position="345"/>
        <end position="505"/>
    </location>
</feature>
<feature type="region of interest" description="Disordered" evidence="4">
    <location>
        <begin position="1"/>
        <end position="123"/>
    </location>
</feature>
<feature type="short sequence motif" description="Q motif">
    <location>
        <begin position="134"/>
        <end position="162"/>
    </location>
</feature>
<feature type="short sequence motif" description="DEAD box">
    <location>
        <begin position="283"/>
        <end position="286"/>
    </location>
</feature>
<feature type="compositionally biased region" description="Low complexity" evidence="4">
    <location>
        <begin position="18"/>
        <end position="53"/>
    </location>
</feature>
<feature type="compositionally biased region" description="Basic residues" evidence="4">
    <location>
        <begin position="54"/>
        <end position="64"/>
    </location>
</feature>
<feature type="binding site" evidence="2">
    <location>
        <begin position="178"/>
        <end position="185"/>
    </location>
    <ligand>
        <name>ATP</name>
        <dbReference type="ChEBI" id="CHEBI:30616"/>
    </ligand>
</feature>
<feature type="splice variant" id="VSP_024161" description="In isoform 2." evidence="5">
    <location>
        <begin position="31"/>
        <end position="55"/>
    </location>
</feature>
<feature type="sequence conflict" description="In Ref. 5; AK066504." evidence="6" ref="5">
    <original>P</original>
    <variation>S</variation>
    <location>
        <position position="118"/>
    </location>
</feature>
<organism>
    <name type="scientific">Oryza sativa subsp. japonica</name>
    <name type="common">Rice</name>
    <dbReference type="NCBI Taxonomy" id="39947"/>
    <lineage>
        <taxon>Eukaryota</taxon>
        <taxon>Viridiplantae</taxon>
        <taxon>Streptophyta</taxon>
        <taxon>Embryophyta</taxon>
        <taxon>Tracheophyta</taxon>
        <taxon>Spermatophyta</taxon>
        <taxon>Magnoliopsida</taxon>
        <taxon>Liliopsida</taxon>
        <taxon>Poales</taxon>
        <taxon>Poaceae</taxon>
        <taxon>BOP clade</taxon>
        <taxon>Oryzoideae</taxon>
        <taxon>Oryzeae</taxon>
        <taxon>Oryzinae</taxon>
        <taxon>Oryza</taxon>
        <taxon>Oryza sativa</taxon>
    </lineage>
</organism>
<comment type="function">
    <text evidence="1">ATP-dependent RNA helicase involved in mRNA turnover, and more specifically in mRNA decapping.</text>
</comment>
<comment type="catalytic activity">
    <reaction>
        <text>ATP + H2O = ADP + phosphate + H(+)</text>
        <dbReference type="Rhea" id="RHEA:13065"/>
        <dbReference type="ChEBI" id="CHEBI:15377"/>
        <dbReference type="ChEBI" id="CHEBI:15378"/>
        <dbReference type="ChEBI" id="CHEBI:30616"/>
        <dbReference type="ChEBI" id="CHEBI:43474"/>
        <dbReference type="ChEBI" id="CHEBI:456216"/>
        <dbReference type="EC" id="3.6.4.13"/>
    </reaction>
</comment>
<comment type="subcellular location">
    <subcellularLocation>
        <location evidence="1">Cytoplasm</location>
        <location evidence="1">P-body</location>
    </subcellularLocation>
    <text evidence="1">Is concentrated in several cytoplasmic foci called P bodies (or cytoplasmic processing bodies) which represent sites of mRNA decapping and 5' to 3' exonucleotidic decay.</text>
</comment>
<comment type="alternative products">
    <event type="alternative splicing"/>
    <isoform>
        <id>Q6H7S2-1</id>
        <name>1</name>
        <sequence type="displayed"/>
    </isoform>
    <isoform>
        <id>Q6H7S2-2</id>
        <name>2</name>
        <sequence type="described" ref="VSP_024161"/>
    </isoform>
</comment>
<comment type="domain">
    <text>The Q motif is unique to and characteristic of the DEAD box family of RNA helicases and controls ATP binding and hydrolysis.</text>
</comment>
<comment type="similarity">
    <text evidence="6">Belongs to the DEAD box helicase family. DDX6/DHH1 subfamily.</text>
</comment>